<evidence type="ECO:0000250" key="1">
    <source>
        <dbReference type="UniProtKB" id="P0C048"/>
    </source>
</evidence>
<evidence type="ECO:0000250" key="2">
    <source>
        <dbReference type="UniProtKB" id="Q2G184"/>
    </source>
</evidence>
<evidence type="ECO:0000255" key="3"/>
<evidence type="ECO:0000255" key="4">
    <source>
        <dbReference type="PROSITE-ProRule" id="PRU00289"/>
    </source>
</evidence>
<evidence type="ECO:0000305" key="5"/>
<name>ESSC_STAAS</name>
<comment type="function">
    <text evidence="2">Component of the type VII secretion system (Ess). Required for the secretion of substrates including EsxA and EsxB. However, unable to support secretion of the substrate protein EsxC.</text>
</comment>
<comment type="subunit">
    <text evidence="2">Homooligomer. Interacts with EsaE.</text>
</comment>
<comment type="subcellular location">
    <subcellularLocation>
        <location evidence="2">Cell membrane</location>
        <topology evidence="3">Multi-pass membrane protein</topology>
    </subcellularLocation>
</comment>
<comment type="similarity">
    <text evidence="5">Belongs to the EssC family.</text>
</comment>
<reference key="1">
    <citation type="journal article" date="2004" name="Proc. Natl. Acad. Sci. U.S.A.">
        <title>Complete genomes of two clinical Staphylococcus aureus strains: evidence for the rapid evolution of virulence and drug resistance.</title>
        <authorList>
            <person name="Holden M.T.G."/>
            <person name="Feil E.J."/>
            <person name="Lindsay J.A."/>
            <person name="Peacock S.J."/>
            <person name="Day N.P.J."/>
            <person name="Enright M.C."/>
            <person name="Foster T.J."/>
            <person name="Moore C.E."/>
            <person name="Hurst L."/>
            <person name="Atkin R."/>
            <person name="Barron A."/>
            <person name="Bason N."/>
            <person name="Bentley S.D."/>
            <person name="Chillingworth C."/>
            <person name="Chillingworth T."/>
            <person name="Churcher C."/>
            <person name="Clark L."/>
            <person name="Corton C."/>
            <person name="Cronin A."/>
            <person name="Doggett J."/>
            <person name="Dowd L."/>
            <person name="Feltwell T."/>
            <person name="Hance Z."/>
            <person name="Harris B."/>
            <person name="Hauser H."/>
            <person name="Holroyd S."/>
            <person name="Jagels K."/>
            <person name="James K.D."/>
            <person name="Lennard N."/>
            <person name="Line A."/>
            <person name="Mayes R."/>
            <person name="Moule S."/>
            <person name="Mungall K."/>
            <person name="Ormond D."/>
            <person name="Quail M.A."/>
            <person name="Rabbinowitsch E."/>
            <person name="Rutherford K.M."/>
            <person name="Sanders M."/>
            <person name="Sharp S."/>
            <person name="Simmonds M."/>
            <person name="Stevens K."/>
            <person name="Whitehead S."/>
            <person name="Barrell B.G."/>
            <person name="Spratt B.G."/>
            <person name="Parkhill J."/>
        </authorList>
    </citation>
    <scope>NUCLEOTIDE SEQUENCE [LARGE SCALE GENOMIC DNA]</scope>
    <source>
        <strain>MSSA476</strain>
    </source>
</reference>
<gene>
    <name evidence="1" type="primary">essC</name>
    <name type="ordered locus">SAS0263</name>
</gene>
<protein>
    <recommendedName>
        <fullName evidence="1">Type VII secretion system protein EssC</fullName>
    </recommendedName>
</protein>
<sequence>MHKLIIKYNKQLKMLNLRDGKTYTISEDERADITLKSLGEVIHLEQNNQGTWQANHTSINKVLVRKGDLDDITLQLYTEADYASFAYPSIQDTMTIGPNAYDDMVIQSLMNAIIIKDFQSIQESQYVRIVHDKNTDVYINYELQEQLTNKAYIGDHIYVEGIWLEVQADGLNVLSQNTVASSLIRLTQEMPHAQADDYNTYHRSPRIIHREPTDDIKIERPPQPIQKNNTVIWRSIIPPLVMIALTVVIFLVRPIGIYILMMIGMSSVTIVFGITTYFSEKKKYNKDVEKREKDYKDYLDNKSKEINKAIKAQRFSLNYHYPTVAEIKDIVETKAPRIYEKTSHHHDFLHYKLGIANVEKSFKLDYQEEEFNQRRDELFDDAKELYEFYTDVEQAPLINDLNHGPIAYIGARHLILEELEKMLIQLSIFHSYHDLEFLFVTREDEVETLKWARWLPHMTLRGQNIRGFVYNQRTRDQILTSIYSMIKERIQAVRERSKSNEQIIFTPQLVFVITDMSLIIDHVILEYVNQDLSEYGISLIFVEDVIESLPEHVDTIIDIKSRTEGELITKEKELVQLKFTPENIDNVDKEYIARRLANLIHVEHLKNAIPDSITFLEMYNVKEVDQLDVVNRWRQNETYKTMAVPLGVRGKDDILSLNLHEKAHGPHGLVAGTTGSGKSEIIQSYILSLAINFHPHEVAFLLIDYKGGGMANLFKDLVHLVGTITNLDGDEAMRALTSIKAELRKRQRLFGEHDVNHINQYHKLFKEGIATEPMPHLFIISDEFAELKSEQPDFMKELVSTARIGRSLGIHLILATQKPSGVVDDQIWSNSKFKLALKVQDRQDSNEILKTPDAADITLPGRAYLQVGNNEIYELFQSAWSGATYDIEGDKLEVEDKTIYMINDYGQLQAINKDLSGLEDEETKENQTELEAVIDHIESITTRLEIEEVKRPWLPPLPENVYQEDLVETDFRKLWSDDAKEVELTLGLKDVPEEQYQGPMVLQLKKAGHIALIGSPGYGRTTFLHNIIFDVARHHRPDQAHMYLFDFGTNGLMPVTDIPHVADYFTVDQEDKIAKAIRIFNDEIDRRKKILSQYRVTSISEYRKLTGETIPHVFILIDNFDAVKDSPFQEVFENMMIKMTREGLALDMQVTLTASRANAMKTPMYINMKTRIAMFLYDKSEVSNVVGQQKFAVKDVVGRALLSSDDNVSFHIGQPFKHDETKSYNDQINDEVSAMTEFYKGETPSDIPMMPDEIKYEDYRESLSLPDIVANGALPIGLDYEGVTLQKIKLTEPAMISSENPREIAHIAEIMMKEIDILNEKYAICIADSSGEFKAYRHQVANFAEEREDIKAIHQLMIEDLKQREMDGPFEKDSLYIINDFKTFIDCTYIPEDDVKKLITKGPELGLNILFVGIHKELIDAYDKQIDVARKMINQFSIGIRISDQQFFKFRFIQREPVIKENEAYMVANQAYQKIRWFK</sequence>
<feature type="chain" id="PRO_0000098333" description="Type VII secretion system protein EssC">
    <location>
        <begin position="1"/>
        <end position="1479"/>
    </location>
</feature>
<feature type="topological domain" description="Cytoplasmic" evidence="1">
    <location>
        <begin position="1"/>
        <end position="229"/>
    </location>
</feature>
<feature type="transmembrane region" description="Helical" evidence="3">
    <location>
        <begin position="230"/>
        <end position="252"/>
    </location>
</feature>
<feature type="topological domain" description="Extracellular" evidence="1">
    <location>
        <begin position="253"/>
        <end position="256"/>
    </location>
</feature>
<feature type="transmembrane region" description="Helical" evidence="3">
    <location>
        <begin position="257"/>
        <end position="279"/>
    </location>
</feature>
<feature type="topological domain" description="Cytoplasmic" evidence="1">
    <location>
        <begin position="280"/>
        <end position="1479"/>
    </location>
</feature>
<feature type="domain" description="FtsK 1" evidence="4">
    <location>
        <begin position="652"/>
        <end position="846"/>
    </location>
</feature>
<feature type="domain" description="FtsK 2" evidence="4">
    <location>
        <begin position="997"/>
        <end position="1183"/>
    </location>
</feature>
<feature type="binding site" evidence="4">
    <location>
        <begin position="672"/>
        <end position="679"/>
    </location>
    <ligand>
        <name>ATP</name>
        <dbReference type="ChEBI" id="CHEBI:30616"/>
    </ligand>
</feature>
<feature type="binding site" evidence="4">
    <location>
        <begin position="1014"/>
        <end position="1021"/>
    </location>
    <ligand>
        <name>ATP</name>
        <dbReference type="ChEBI" id="CHEBI:30616"/>
    </ligand>
</feature>
<organism>
    <name type="scientific">Staphylococcus aureus (strain MSSA476)</name>
    <dbReference type="NCBI Taxonomy" id="282459"/>
    <lineage>
        <taxon>Bacteria</taxon>
        <taxon>Bacillati</taxon>
        <taxon>Bacillota</taxon>
        <taxon>Bacilli</taxon>
        <taxon>Bacillales</taxon>
        <taxon>Staphylococcaceae</taxon>
        <taxon>Staphylococcus</taxon>
    </lineage>
</organism>
<accession>Q6GCI5</accession>
<keyword id="KW-0067">ATP-binding</keyword>
<keyword id="KW-1003">Cell membrane</keyword>
<keyword id="KW-0472">Membrane</keyword>
<keyword id="KW-0547">Nucleotide-binding</keyword>
<keyword id="KW-0677">Repeat</keyword>
<keyword id="KW-0812">Transmembrane</keyword>
<keyword id="KW-1133">Transmembrane helix</keyword>
<keyword id="KW-0843">Virulence</keyword>
<proteinExistence type="inferred from homology"/>
<dbReference type="EMBL" id="BX571857">
    <property type="protein sequence ID" value="CAG42034.1"/>
    <property type="molecule type" value="Genomic_DNA"/>
</dbReference>
<dbReference type="RefSeq" id="WP_000549274.1">
    <property type="nucleotide sequence ID" value="NC_002953.3"/>
</dbReference>
<dbReference type="SMR" id="Q6GCI5"/>
<dbReference type="KEGG" id="sas:SAS0263"/>
<dbReference type="HOGENOM" id="CLU_003134_2_1_9"/>
<dbReference type="GO" id="GO:0005886">
    <property type="term" value="C:plasma membrane"/>
    <property type="evidence" value="ECO:0007669"/>
    <property type="project" value="UniProtKB-SubCell"/>
</dbReference>
<dbReference type="GO" id="GO:0005524">
    <property type="term" value="F:ATP binding"/>
    <property type="evidence" value="ECO:0007669"/>
    <property type="project" value="UniProtKB-KW"/>
</dbReference>
<dbReference type="GO" id="GO:0003677">
    <property type="term" value="F:DNA binding"/>
    <property type="evidence" value="ECO:0007669"/>
    <property type="project" value="InterPro"/>
</dbReference>
<dbReference type="CDD" id="cd01127">
    <property type="entry name" value="TrwB_TraG_TraD_VirD4"/>
    <property type="match status" value="1"/>
</dbReference>
<dbReference type="Gene3D" id="2.60.200.20">
    <property type="match status" value="2"/>
</dbReference>
<dbReference type="Gene3D" id="3.40.50.300">
    <property type="entry name" value="P-loop containing nucleotide triphosphate hydrolases"/>
    <property type="match status" value="2"/>
</dbReference>
<dbReference type="InterPro" id="IPR023839">
    <property type="entry name" value="Firmicutes_EssC_C"/>
</dbReference>
<dbReference type="InterPro" id="IPR022206">
    <property type="entry name" value="Firmicutes_EssC_N"/>
</dbReference>
<dbReference type="InterPro" id="IPR050206">
    <property type="entry name" value="FtsK/SpoIIIE/SftA"/>
</dbReference>
<dbReference type="InterPro" id="IPR002543">
    <property type="entry name" value="FtsK_dom"/>
</dbReference>
<dbReference type="InterPro" id="IPR027417">
    <property type="entry name" value="P-loop_NTPase"/>
</dbReference>
<dbReference type="InterPro" id="IPR008984">
    <property type="entry name" value="SMAD_FHA_dom_sf"/>
</dbReference>
<dbReference type="NCBIfam" id="TIGR03928">
    <property type="entry name" value="T7_EssCb_Firm"/>
    <property type="match status" value="1"/>
</dbReference>
<dbReference type="PANTHER" id="PTHR22683:SF41">
    <property type="entry name" value="DNA TRANSLOCASE FTSK"/>
    <property type="match status" value="1"/>
</dbReference>
<dbReference type="PANTHER" id="PTHR22683">
    <property type="entry name" value="SPORULATION PROTEIN RELATED"/>
    <property type="match status" value="1"/>
</dbReference>
<dbReference type="Pfam" id="PF01580">
    <property type="entry name" value="FtsK_SpoIIIE"/>
    <property type="match status" value="2"/>
</dbReference>
<dbReference type="Pfam" id="PF12538">
    <property type="entry name" value="FtsK_SpoIIIE_N"/>
    <property type="match status" value="1"/>
</dbReference>
<dbReference type="SUPFAM" id="SSF52540">
    <property type="entry name" value="P-loop containing nucleoside triphosphate hydrolases"/>
    <property type="match status" value="2"/>
</dbReference>
<dbReference type="SUPFAM" id="SSF49879">
    <property type="entry name" value="SMAD/FHA domain"/>
    <property type="match status" value="2"/>
</dbReference>
<dbReference type="PROSITE" id="PS50901">
    <property type="entry name" value="FTSK"/>
    <property type="match status" value="2"/>
</dbReference>